<sequence length="259" mass="29357">MIRKTQAIVLRTINYGDQSKIVTFFTRSFGKLTGLVKGYRNPKGKFASVLEIGNDLDLVLYKKDTREVQLITEAVLRAPMLGATSSLEQLSALHQTLELIRLTTENDDAHLGVFELLHATLQKINVSRKNHISFFFYFQVQLISLLGFRLNFQKCVLTGKSLSEKALPKDARVVLLAEHGGFALQLAAEERGFAGMPVSTDAFKAVQWLSLVAIESVENLFLEKLVINEIFQLLDSYFRFHIDDLPAFRSREIFNQLVF</sequence>
<gene>
    <name evidence="1" type="primary">recO</name>
    <name type="ordered locus">Ctha_0349</name>
</gene>
<dbReference type="EMBL" id="CP001100">
    <property type="protein sequence ID" value="ACF12820.1"/>
    <property type="molecule type" value="Genomic_DNA"/>
</dbReference>
<dbReference type="RefSeq" id="WP_012498904.1">
    <property type="nucleotide sequence ID" value="NC_011026.1"/>
</dbReference>
<dbReference type="SMR" id="B3QU22"/>
<dbReference type="STRING" id="517418.Ctha_0349"/>
<dbReference type="KEGG" id="cts:Ctha_0349"/>
<dbReference type="eggNOG" id="COG1381">
    <property type="taxonomic scope" value="Bacteria"/>
</dbReference>
<dbReference type="HOGENOM" id="CLU_066632_1_0_10"/>
<dbReference type="OrthoDB" id="9789152at2"/>
<dbReference type="Proteomes" id="UP000001208">
    <property type="component" value="Chromosome"/>
</dbReference>
<dbReference type="GO" id="GO:0043590">
    <property type="term" value="C:bacterial nucleoid"/>
    <property type="evidence" value="ECO:0007669"/>
    <property type="project" value="TreeGrafter"/>
</dbReference>
<dbReference type="GO" id="GO:0006310">
    <property type="term" value="P:DNA recombination"/>
    <property type="evidence" value="ECO:0007669"/>
    <property type="project" value="UniProtKB-UniRule"/>
</dbReference>
<dbReference type="GO" id="GO:0006302">
    <property type="term" value="P:double-strand break repair"/>
    <property type="evidence" value="ECO:0007669"/>
    <property type="project" value="TreeGrafter"/>
</dbReference>
<dbReference type="Gene3D" id="2.40.50.140">
    <property type="entry name" value="Nucleic acid-binding proteins"/>
    <property type="match status" value="1"/>
</dbReference>
<dbReference type="Gene3D" id="1.20.1440.120">
    <property type="entry name" value="Recombination protein O, C-terminal domain"/>
    <property type="match status" value="1"/>
</dbReference>
<dbReference type="HAMAP" id="MF_00201">
    <property type="entry name" value="RecO"/>
    <property type="match status" value="1"/>
</dbReference>
<dbReference type="InterPro" id="IPR037278">
    <property type="entry name" value="ARFGAP/RecO"/>
</dbReference>
<dbReference type="InterPro" id="IPR022572">
    <property type="entry name" value="DNA_rep/recomb_RecO_N"/>
</dbReference>
<dbReference type="InterPro" id="IPR012340">
    <property type="entry name" value="NA-bd_OB-fold"/>
</dbReference>
<dbReference type="InterPro" id="IPR003717">
    <property type="entry name" value="RecO"/>
</dbReference>
<dbReference type="InterPro" id="IPR042242">
    <property type="entry name" value="RecO_C"/>
</dbReference>
<dbReference type="NCBIfam" id="TIGR00613">
    <property type="entry name" value="reco"/>
    <property type="match status" value="1"/>
</dbReference>
<dbReference type="PANTHER" id="PTHR33991">
    <property type="entry name" value="DNA REPAIR PROTEIN RECO"/>
    <property type="match status" value="1"/>
</dbReference>
<dbReference type="PANTHER" id="PTHR33991:SF1">
    <property type="entry name" value="DNA REPAIR PROTEIN RECO"/>
    <property type="match status" value="1"/>
</dbReference>
<dbReference type="Pfam" id="PF02565">
    <property type="entry name" value="RecO_C"/>
    <property type="match status" value="1"/>
</dbReference>
<dbReference type="Pfam" id="PF11967">
    <property type="entry name" value="RecO_N"/>
    <property type="match status" value="1"/>
</dbReference>
<dbReference type="SUPFAM" id="SSF57863">
    <property type="entry name" value="ArfGap/RecO-like zinc finger"/>
    <property type="match status" value="1"/>
</dbReference>
<dbReference type="SUPFAM" id="SSF50249">
    <property type="entry name" value="Nucleic acid-binding proteins"/>
    <property type="match status" value="1"/>
</dbReference>
<protein>
    <recommendedName>
        <fullName evidence="1">DNA repair protein RecO</fullName>
    </recommendedName>
    <alternativeName>
        <fullName evidence="1">Recombination protein O</fullName>
    </alternativeName>
</protein>
<organism>
    <name type="scientific">Chloroherpeton thalassium (strain ATCC 35110 / GB-78)</name>
    <dbReference type="NCBI Taxonomy" id="517418"/>
    <lineage>
        <taxon>Bacteria</taxon>
        <taxon>Pseudomonadati</taxon>
        <taxon>Chlorobiota</taxon>
        <taxon>Chlorobiia</taxon>
        <taxon>Chlorobiales</taxon>
        <taxon>Chloroherpetonaceae</taxon>
        <taxon>Chloroherpeton</taxon>
    </lineage>
</organism>
<reference key="1">
    <citation type="submission" date="2008-06" db="EMBL/GenBank/DDBJ databases">
        <title>Complete sequence of Chloroherpeton thalassium ATCC 35110.</title>
        <authorList>
            <consortium name="US DOE Joint Genome Institute"/>
            <person name="Lucas S."/>
            <person name="Copeland A."/>
            <person name="Lapidus A."/>
            <person name="Glavina del Rio T."/>
            <person name="Dalin E."/>
            <person name="Tice H."/>
            <person name="Bruce D."/>
            <person name="Goodwin L."/>
            <person name="Pitluck S."/>
            <person name="Schmutz J."/>
            <person name="Larimer F."/>
            <person name="Land M."/>
            <person name="Hauser L."/>
            <person name="Kyrpides N."/>
            <person name="Mikhailova N."/>
            <person name="Liu Z."/>
            <person name="Li T."/>
            <person name="Zhao F."/>
            <person name="Overmann J."/>
            <person name="Bryant D.A."/>
            <person name="Richardson P."/>
        </authorList>
    </citation>
    <scope>NUCLEOTIDE SEQUENCE [LARGE SCALE GENOMIC DNA]</scope>
    <source>
        <strain>ATCC 35110 / GB-78</strain>
    </source>
</reference>
<comment type="function">
    <text evidence="1">Involved in DNA repair and RecF pathway recombination.</text>
</comment>
<comment type="similarity">
    <text evidence="1">Belongs to the RecO family.</text>
</comment>
<evidence type="ECO:0000255" key="1">
    <source>
        <dbReference type="HAMAP-Rule" id="MF_00201"/>
    </source>
</evidence>
<keyword id="KW-0227">DNA damage</keyword>
<keyword id="KW-0233">DNA recombination</keyword>
<keyword id="KW-0234">DNA repair</keyword>
<keyword id="KW-1185">Reference proteome</keyword>
<proteinExistence type="inferred from homology"/>
<accession>B3QU22</accession>
<name>RECO_CHLT3</name>
<feature type="chain" id="PRO_1000193367" description="DNA repair protein RecO">
    <location>
        <begin position="1"/>
        <end position="259"/>
    </location>
</feature>